<proteinExistence type="evidence at protein level"/>
<accession>Q32PX7</accession>
<evidence type="ECO:0000250" key="1">
    <source>
        <dbReference type="UniProtKB" id="Q91WJ8"/>
    </source>
</evidence>
<evidence type="ECO:0000250" key="2">
    <source>
        <dbReference type="UniProtKB" id="Q96AE4"/>
    </source>
</evidence>
<evidence type="ECO:0000255" key="3">
    <source>
        <dbReference type="PROSITE-ProRule" id="PRU00117"/>
    </source>
</evidence>
<evidence type="ECO:0000256" key="4">
    <source>
        <dbReference type="SAM" id="MobiDB-lite"/>
    </source>
</evidence>
<evidence type="ECO:0000269" key="5">
    <source>
    </source>
</evidence>
<evidence type="ECO:0000305" key="6"/>
<evidence type="ECO:0000312" key="7">
    <source>
        <dbReference type="EMBL" id="AAI07943.1"/>
    </source>
</evidence>
<evidence type="ECO:0000312" key="8">
    <source>
        <dbReference type="RGD" id="1591892"/>
    </source>
</evidence>
<evidence type="ECO:0007744" key="9">
    <source>
    </source>
</evidence>
<reference evidence="7" key="1">
    <citation type="journal article" date="2004" name="Genome Res.">
        <title>The status, quality, and expansion of the NIH full-length cDNA project: the Mammalian Gene Collection (MGC).</title>
        <authorList>
            <consortium name="The MGC Project Team"/>
        </authorList>
    </citation>
    <scope>NUCLEOTIDE SEQUENCE [LARGE SCALE MRNA]</scope>
    <source>
        <strain evidence="5">Brown Norway</strain>
        <tissue evidence="7">Thymus</tissue>
    </source>
</reference>
<reference evidence="6" key="2">
    <citation type="submission" date="2009-01" db="UniProtKB">
        <authorList>
            <person name="Maurya D.K."/>
            <person name="Bhargava P."/>
        </authorList>
    </citation>
    <scope>IDENTIFICATION BY MASS SPECTROMETRY</scope>
</reference>
<reference key="3">
    <citation type="journal article" date="2012" name="Nat. Commun.">
        <title>Quantitative maps of protein phosphorylation sites across 14 different rat organs and tissues.</title>
        <authorList>
            <person name="Lundby A."/>
            <person name="Secher A."/>
            <person name="Lage K."/>
            <person name="Nordsborg N.B."/>
            <person name="Dmytriyev A."/>
            <person name="Lundby C."/>
            <person name="Olsen J.V."/>
        </authorList>
    </citation>
    <scope>PHOSPHORYLATION [LARGE SCALE ANALYSIS] AT SER-625</scope>
    <scope>IDENTIFICATION BY MASS SPECTROMETRY [LARGE SCALE ANALYSIS]</scope>
</reference>
<gene>
    <name evidence="7 8" type="primary">Fubp1</name>
</gene>
<protein>
    <recommendedName>
        <fullName evidence="2 7">Far upstream element-binding protein 1</fullName>
        <shortName evidence="2">FBP</shortName>
        <shortName evidence="2">FUSE-binding protein 1</shortName>
    </recommendedName>
</protein>
<dbReference type="EMBL" id="BC107942">
    <property type="protein sequence ID" value="AAI07943.1"/>
    <property type="molecule type" value="mRNA"/>
</dbReference>
<dbReference type="RefSeq" id="NP_001032742.1">
    <property type="nucleotide sequence ID" value="NM_001037653.1"/>
</dbReference>
<dbReference type="SMR" id="Q32PX7"/>
<dbReference type="FunCoup" id="Q32PX7">
    <property type="interactions" value="4950"/>
</dbReference>
<dbReference type="IntAct" id="Q32PX7">
    <property type="interactions" value="2"/>
</dbReference>
<dbReference type="STRING" id="10116.ENSRNOP00000061544"/>
<dbReference type="iPTMnet" id="Q32PX7"/>
<dbReference type="PhosphoSitePlus" id="Q32PX7"/>
<dbReference type="jPOST" id="Q32PX7"/>
<dbReference type="PaxDb" id="10116-ENSRNOP00000061544"/>
<dbReference type="GeneID" id="654496"/>
<dbReference type="KEGG" id="rno:654496"/>
<dbReference type="AGR" id="RGD:1591892"/>
<dbReference type="CTD" id="8880"/>
<dbReference type="RGD" id="1591892">
    <property type="gene designation" value="Fubp1"/>
</dbReference>
<dbReference type="eggNOG" id="KOG1676">
    <property type="taxonomic scope" value="Eukaryota"/>
</dbReference>
<dbReference type="HOGENOM" id="CLU_014285_1_0_1"/>
<dbReference type="InParanoid" id="Q32PX7"/>
<dbReference type="OrthoDB" id="5204190at2759"/>
<dbReference type="PhylomeDB" id="Q32PX7"/>
<dbReference type="PRO" id="PR:Q32PX7"/>
<dbReference type="Proteomes" id="UP000002494">
    <property type="component" value="Unplaced"/>
</dbReference>
<dbReference type="GO" id="GO:0005737">
    <property type="term" value="C:cytoplasm"/>
    <property type="evidence" value="ECO:0000318"/>
    <property type="project" value="GO_Central"/>
</dbReference>
<dbReference type="GO" id="GO:0005634">
    <property type="term" value="C:nucleus"/>
    <property type="evidence" value="ECO:0000266"/>
    <property type="project" value="RGD"/>
</dbReference>
<dbReference type="GO" id="GO:0045202">
    <property type="term" value="C:synapse"/>
    <property type="evidence" value="ECO:0000266"/>
    <property type="project" value="RGD"/>
</dbReference>
<dbReference type="GO" id="GO:0003729">
    <property type="term" value="F:mRNA binding"/>
    <property type="evidence" value="ECO:0000318"/>
    <property type="project" value="GO_Central"/>
</dbReference>
<dbReference type="GO" id="GO:0000978">
    <property type="term" value="F:RNA polymerase II cis-regulatory region sequence-specific DNA binding"/>
    <property type="evidence" value="ECO:0000266"/>
    <property type="project" value="RGD"/>
</dbReference>
<dbReference type="GO" id="GO:0071222">
    <property type="term" value="P:cellular response to lipopolysaccharide"/>
    <property type="evidence" value="ECO:0000270"/>
    <property type="project" value="RGD"/>
</dbReference>
<dbReference type="GO" id="GO:0071425">
    <property type="term" value="P:hematopoietic stem cell proliferation"/>
    <property type="evidence" value="ECO:0000266"/>
    <property type="project" value="RGD"/>
</dbReference>
<dbReference type="GO" id="GO:0010628">
    <property type="term" value="P:positive regulation of gene expression"/>
    <property type="evidence" value="ECO:0000266"/>
    <property type="project" value="RGD"/>
</dbReference>
<dbReference type="GO" id="GO:1900149">
    <property type="term" value="P:positive regulation of Schwann cell migration"/>
    <property type="evidence" value="ECO:0000315"/>
    <property type="project" value="RGD"/>
</dbReference>
<dbReference type="GO" id="GO:0006357">
    <property type="term" value="P:regulation of transcription by RNA polymerase II"/>
    <property type="evidence" value="ECO:0000266"/>
    <property type="project" value="RGD"/>
</dbReference>
<dbReference type="GO" id="GO:0031667">
    <property type="term" value="P:response to nutrient levels"/>
    <property type="evidence" value="ECO:0000270"/>
    <property type="project" value="RGD"/>
</dbReference>
<dbReference type="GO" id="GO:0048103">
    <property type="term" value="P:somatic stem cell division"/>
    <property type="evidence" value="ECO:0000266"/>
    <property type="project" value="RGD"/>
</dbReference>
<dbReference type="CDD" id="cd22478">
    <property type="entry name" value="KH-I_FUBP1_rpt1"/>
    <property type="match status" value="1"/>
</dbReference>
<dbReference type="CDD" id="cd22481">
    <property type="entry name" value="KH-I_FUBP1_rpt2"/>
    <property type="match status" value="1"/>
</dbReference>
<dbReference type="CDD" id="cd22484">
    <property type="entry name" value="KH-I_FUBP1_rpt3"/>
    <property type="match status" value="1"/>
</dbReference>
<dbReference type="CDD" id="cd22487">
    <property type="entry name" value="KH-I_FUBP1_rpt4"/>
    <property type="match status" value="1"/>
</dbReference>
<dbReference type="FunFam" id="3.30.1370.10:FF:000015">
    <property type="entry name" value="Far upstream element-binding protein 1 isoform X1"/>
    <property type="match status" value="1"/>
</dbReference>
<dbReference type="FunFam" id="3.30.1370.10:FF:000007">
    <property type="entry name" value="far upstream element-binding protein 1 isoform X1"/>
    <property type="match status" value="1"/>
</dbReference>
<dbReference type="FunFam" id="3.30.1370.10:FF:000008">
    <property type="entry name" value="far upstream element-binding protein 1 isoform X1"/>
    <property type="match status" value="1"/>
</dbReference>
<dbReference type="FunFam" id="3.30.1370.10:FF:000010">
    <property type="entry name" value="far upstream element-binding protein 1 isoform X1"/>
    <property type="match status" value="1"/>
</dbReference>
<dbReference type="Gene3D" id="3.30.1370.10">
    <property type="entry name" value="K Homology domain, type 1"/>
    <property type="match status" value="4"/>
</dbReference>
<dbReference type="InterPro" id="IPR015096">
    <property type="entry name" value="FUBP_C"/>
</dbReference>
<dbReference type="InterPro" id="IPR048249">
    <property type="entry name" value="KH-I_FUBP1_dom1"/>
</dbReference>
<dbReference type="InterPro" id="IPR048250">
    <property type="entry name" value="KH-I_FUBP1_dom2"/>
</dbReference>
<dbReference type="InterPro" id="IPR048251">
    <property type="entry name" value="KH-I_FUBP1_dom3"/>
</dbReference>
<dbReference type="InterPro" id="IPR048252">
    <property type="entry name" value="KH-I_FUBP1_dom4"/>
</dbReference>
<dbReference type="InterPro" id="IPR004087">
    <property type="entry name" value="KH_dom"/>
</dbReference>
<dbReference type="InterPro" id="IPR004088">
    <property type="entry name" value="KH_dom_type_1"/>
</dbReference>
<dbReference type="InterPro" id="IPR036612">
    <property type="entry name" value="KH_dom_type_1_sf"/>
</dbReference>
<dbReference type="PANTHER" id="PTHR10288">
    <property type="entry name" value="KH DOMAIN CONTAINING RNA BINDING PROTEIN"/>
    <property type="match status" value="1"/>
</dbReference>
<dbReference type="Pfam" id="PF09005">
    <property type="entry name" value="FUBP_C"/>
    <property type="match status" value="2"/>
</dbReference>
<dbReference type="Pfam" id="PF00013">
    <property type="entry name" value="KH_1"/>
    <property type="match status" value="4"/>
</dbReference>
<dbReference type="SMART" id="SM00322">
    <property type="entry name" value="KH"/>
    <property type="match status" value="4"/>
</dbReference>
<dbReference type="SUPFAM" id="SSF54791">
    <property type="entry name" value="Eukaryotic type KH-domain (KH-domain type I)"/>
    <property type="match status" value="4"/>
</dbReference>
<dbReference type="PROSITE" id="PS50084">
    <property type="entry name" value="KH_TYPE_1"/>
    <property type="match status" value="4"/>
</dbReference>
<keyword id="KW-0007">Acetylation</keyword>
<keyword id="KW-0238">DNA-binding</keyword>
<keyword id="KW-0488">Methylation</keyword>
<keyword id="KW-0539">Nucleus</keyword>
<keyword id="KW-0597">Phosphoprotein</keyword>
<keyword id="KW-1185">Reference proteome</keyword>
<keyword id="KW-0677">Repeat</keyword>
<keyword id="KW-0804">Transcription</keyword>
<keyword id="KW-0805">Transcription regulation</keyword>
<keyword id="KW-0832">Ubl conjugation</keyword>
<feature type="initiator methionine" description="Removed" evidence="2">
    <location>
        <position position="1"/>
    </location>
</feature>
<feature type="chain" id="PRO_0000365105" description="Far upstream element-binding protein 1">
    <location>
        <begin position="2"/>
        <end position="639"/>
    </location>
</feature>
<feature type="domain" description="KH 1" evidence="3">
    <location>
        <begin position="95"/>
        <end position="159"/>
    </location>
</feature>
<feature type="domain" description="KH 2" evidence="3">
    <location>
        <begin position="180"/>
        <end position="246"/>
    </location>
</feature>
<feature type="domain" description="KH 3" evidence="3">
    <location>
        <begin position="270"/>
        <end position="334"/>
    </location>
</feature>
<feature type="domain" description="KH 4" evidence="3">
    <location>
        <begin position="371"/>
        <end position="438"/>
    </location>
</feature>
<feature type="region of interest" description="Disordered" evidence="4">
    <location>
        <begin position="1"/>
        <end position="27"/>
    </location>
</feature>
<feature type="region of interest" description="Disordered" evidence="4">
    <location>
        <begin position="40"/>
        <end position="88"/>
    </location>
</feature>
<feature type="region of interest" description="Disordered" evidence="4">
    <location>
        <begin position="341"/>
        <end position="360"/>
    </location>
</feature>
<feature type="region of interest" description="Disordered" evidence="4">
    <location>
        <begin position="442"/>
        <end position="527"/>
    </location>
</feature>
<feature type="region of interest" description="Disordered" evidence="4">
    <location>
        <begin position="543"/>
        <end position="574"/>
    </location>
</feature>
<feature type="compositionally biased region" description="Gly residues" evidence="4">
    <location>
        <begin position="14"/>
        <end position="23"/>
    </location>
</feature>
<feature type="compositionally biased region" description="Basic and acidic residues" evidence="4">
    <location>
        <begin position="61"/>
        <end position="73"/>
    </location>
</feature>
<feature type="compositionally biased region" description="Gly residues" evidence="4">
    <location>
        <begin position="345"/>
        <end position="360"/>
    </location>
</feature>
<feature type="compositionally biased region" description="Pro residues" evidence="4">
    <location>
        <begin position="463"/>
        <end position="500"/>
    </location>
</feature>
<feature type="compositionally biased region" description="Low complexity" evidence="4">
    <location>
        <begin position="551"/>
        <end position="568"/>
    </location>
</feature>
<feature type="modified residue" description="N-acetylalanine" evidence="2">
    <location>
        <position position="2"/>
    </location>
</feature>
<feature type="modified residue" description="Phosphoserine" evidence="2">
    <location>
        <position position="48"/>
    </location>
</feature>
<feature type="modified residue" description="Phosphoserine" evidence="2">
    <location>
        <position position="51"/>
    </location>
</feature>
<feature type="modified residue" description="Phosphoserine" evidence="2">
    <location>
        <position position="135"/>
    </location>
</feature>
<feature type="modified residue" description="Phosphothreonine" evidence="2">
    <location>
        <position position="148"/>
    </location>
</feature>
<feature type="modified residue" description="Omega-N-methylarginine" evidence="1">
    <location>
        <position position="316"/>
    </location>
</feature>
<feature type="modified residue" description="Omega-N-methylarginine" evidence="2">
    <location>
        <position position="354"/>
    </location>
</feature>
<feature type="modified residue" description="Omega-N-methylarginine" evidence="2">
    <location>
        <position position="356"/>
    </location>
</feature>
<feature type="modified residue" description="Omega-N-methylarginine" evidence="2">
    <location>
        <position position="358"/>
    </location>
</feature>
<feature type="modified residue" description="Phosphothreonine" evidence="2">
    <location>
        <position position="427"/>
    </location>
</feature>
<feature type="modified residue" description="Phosphoserine" evidence="9">
    <location>
        <position position="625"/>
    </location>
</feature>
<name>FUBP1_RAT</name>
<sequence length="639" mass="67197">MADYSTVPPPSSGSAGGGGGGGVNDAFKDALQRARQIAAKIGGDAGTSLNSNDYGYGGQKRPLEDGDQPDAKKVPPQNDSFGAQLPPMHQQQRSVMTEEYKVPDGMVGFIIGRGGEQISRIQQESGCKIQIAPDSGGLPERSCMLTGTPESVQSAKRLLDQIVEKGRPAPGFHHGDGPGNAVQEIMIPASKAGLVIGKGGETIKQLQERAGVKMVMIQDGPQNTGADKPLRITGDPYKVQQAKEMVLELIRDQGGFREVRNEYGSRIGGNEGIDVPIPRFAVGIVIGRNGEMIKKIQNDAGVRIQFKPDDGTTPDRIAQITGPPDRCQHAAEIITDLLRSVQAGNPGGPGPGGRGRGRGQGNWNMGPPGGLQEFNFIVPTGKTGLIIGKGGETIKSISQQSGARIELQRNPPPNADPNMKLFTIRGTPQQIDYARQLIEEKIGGPVNPLGPPVPHGPHGVPGPHGPPGPPGPGTPMGPYNPAPYNPGPPGPAPHGPPAPYAPQGWGNAYPHWQQQAPPDPAKAGTDPNSAAWAAYYAHYYQQQAQPPPAAPAGAPTTTQTNGQGDQQNPAPAGQVDYTKAWEEYYKKMGQAVPAPAGAPPGGQPDYSAAWAEYYRQQAAYYAQTSPQGMPQHPPAPQGQ</sequence>
<organism>
    <name type="scientific">Rattus norvegicus</name>
    <name type="common">Rat</name>
    <dbReference type="NCBI Taxonomy" id="10116"/>
    <lineage>
        <taxon>Eukaryota</taxon>
        <taxon>Metazoa</taxon>
        <taxon>Chordata</taxon>
        <taxon>Craniata</taxon>
        <taxon>Vertebrata</taxon>
        <taxon>Euteleostomi</taxon>
        <taxon>Mammalia</taxon>
        <taxon>Eutheria</taxon>
        <taxon>Euarchontoglires</taxon>
        <taxon>Glires</taxon>
        <taxon>Rodentia</taxon>
        <taxon>Myomorpha</taxon>
        <taxon>Muroidea</taxon>
        <taxon>Muridae</taxon>
        <taxon>Murinae</taxon>
        <taxon>Rattus</taxon>
    </lineage>
</organism>
<comment type="function">
    <text evidence="2">Regulates MYC expression by binding to a single-stranded far-upstream element (FUSE) upstream of the MYC promoter. May act both as activator and repressor of transcription (By similarity).</text>
</comment>
<comment type="subunit">
    <text evidence="2">Found in a complex with PUF60 and far upstream element (FUSE) DNA segment. Interacts with PUF60 and JTV1 (By similarity).</text>
</comment>
<comment type="subcellular location">
    <subcellularLocation>
        <location evidence="6">Nucleus</location>
    </subcellularLocation>
</comment>
<comment type="PTM">
    <text evidence="2">Ubiquitinated. This targets the protein for proteasome-mediated degradation (By similarity).</text>
</comment>